<name>IOJAP_CHRVO</name>
<dbReference type="EMBL" id="AE016825">
    <property type="protein sequence ID" value="AAQ58195.1"/>
    <property type="molecule type" value="Genomic_DNA"/>
</dbReference>
<dbReference type="RefSeq" id="WP_011134073.1">
    <property type="nucleotide sequence ID" value="NC_005085.1"/>
</dbReference>
<dbReference type="PDB" id="2ID1">
    <property type="method" value="X-ray"/>
    <property type="resolution" value="3.00 A"/>
    <property type="chains" value="A/B=1-122"/>
</dbReference>
<dbReference type="PDBsum" id="2ID1"/>
<dbReference type="SMR" id="Q7P0P8"/>
<dbReference type="STRING" id="243365.CV_0518"/>
<dbReference type="GeneID" id="66365572"/>
<dbReference type="KEGG" id="cvi:CV_0518"/>
<dbReference type="eggNOG" id="COG0799">
    <property type="taxonomic scope" value="Bacteria"/>
</dbReference>
<dbReference type="HOGENOM" id="CLU_092688_6_1_4"/>
<dbReference type="OrthoDB" id="9793681at2"/>
<dbReference type="EvolutionaryTrace" id="Q7P0P8"/>
<dbReference type="Proteomes" id="UP000001424">
    <property type="component" value="Chromosome"/>
</dbReference>
<dbReference type="GO" id="GO:0005737">
    <property type="term" value="C:cytoplasm"/>
    <property type="evidence" value="ECO:0007669"/>
    <property type="project" value="UniProtKB-SubCell"/>
</dbReference>
<dbReference type="GO" id="GO:0043023">
    <property type="term" value="F:ribosomal large subunit binding"/>
    <property type="evidence" value="ECO:0007669"/>
    <property type="project" value="TreeGrafter"/>
</dbReference>
<dbReference type="GO" id="GO:0042256">
    <property type="term" value="P:cytosolic ribosome assembly"/>
    <property type="evidence" value="ECO:0007669"/>
    <property type="project" value="UniProtKB-UniRule"/>
</dbReference>
<dbReference type="GO" id="GO:0090071">
    <property type="term" value="P:negative regulation of ribosome biogenesis"/>
    <property type="evidence" value="ECO:0007669"/>
    <property type="project" value="UniProtKB-UniRule"/>
</dbReference>
<dbReference type="GO" id="GO:0017148">
    <property type="term" value="P:negative regulation of translation"/>
    <property type="evidence" value="ECO:0007669"/>
    <property type="project" value="UniProtKB-UniRule"/>
</dbReference>
<dbReference type="Gene3D" id="3.30.460.10">
    <property type="entry name" value="Beta Polymerase, domain 2"/>
    <property type="match status" value="1"/>
</dbReference>
<dbReference type="HAMAP" id="MF_01477">
    <property type="entry name" value="Iojap_RsfS"/>
    <property type="match status" value="1"/>
</dbReference>
<dbReference type="InterPro" id="IPR004394">
    <property type="entry name" value="Iojap/RsfS/C7orf30"/>
</dbReference>
<dbReference type="InterPro" id="IPR043519">
    <property type="entry name" value="NT_sf"/>
</dbReference>
<dbReference type="NCBIfam" id="TIGR00090">
    <property type="entry name" value="rsfS_iojap_ybeB"/>
    <property type="match status" value="1"/>
</dbReference>
<dbReference type="PANTHER" id="PTHR21043">
    <property type="entry name" value="IOJAP SUPERFAMILY ORTHOLOG"/>
    <property type="match status" value="1"/>
</dbReference>
<dbReference type="PANTHER" id="PTHR21043:SF0">
    <property type="entry name" value="MITOCHONDRIAL ASSEMBLY OF RIBOSOMAL LARGE SUBUNIT PROTEIN 1"/>
    <property type="match status" value="1"/>
</dbReference>
<dbReference type="Pfam" id="PF02410">
    <property type="entry name" value="RsfS"/>
    <property type="match status" value="1"/>
</dbReference>
<dbReference type="SUPFAM" id="SSF81301">
    <property type="entry name" value="Nucleotidyltransferase"/>
    <property type="match status" value="1"/>
</dbReference>
<gene>
    <name evidence="1" type="primary">rsfS</name>
    <name type="ordered locus">CV_0518</name>
</gene>
<evidence type="ECO:0000255" key="1">
    <source>
        <dbReference type="HAMAP-Rule" id="MF_01477"/>
    </source>
</evidence>
<evidence type="ECO:0007829" key="2">
    <source>
        <dbReference type="PDB" id="2ID1"/>
    </source>
</evidence>
<reference key="1">
    <citation type="journal article" date="2003" name="Proc. Natl. Acad. Sci. U.S.A.">
        <title>The complete genome sequence of Chromobacterium violaceum reveals remarkable and exploitable bacterial adaptability.</title>
        <authorList>
            <person name="Vasconcelos A.T.R."/>
            <person name="de Almeida D.F."/>
            <person name="Hungria M."/>
            <person name="Guimaraes C.T."/>
            <person name="Antonio R.V."/>
            <person name="Almeida F.C."/>
            <person name="de Almeida L.G.P."/>
            <person name="de Almeida R."/>
            <person name="Alves-Gomes J.A."/>
            <person name="Andrade E.M."/>
            <person name="Araripe J."/>
            <person name="de Araujo M.F.F."/>
            <person name="Astolfi-Filho S."/>
            <person name="Azevedo V."/>
            <person name="Baptista A.J."/>
            <person name="Bataus L.A.M."/>
            <person name="Batista J.S."/>
            <person name="Belo A."/>
            <person name="van den Berg C."/>
            <person name="Bogo M."/>
            <person name="Bonatto S."/>
            <person name="Bordignon J."/>
            <person name="Brigido M.M."/>
            <person name="Brito C.A."/>
            <person name="Brocchi M."/>
            <person name="Burity H.A."/>
            <person name="Camargo A.A."/>
            <person name="Cardoso D.D.P."/>
            <person name="Carneiro N.P."/>
            <person name="Carraro D.M."/>
            <person name="Carvalho C.M.B."/>
            <person name="Cascardo J.C.M."/>
            <person name="Cavada B.S."/>
            <person name="Chueire L.M.O."/>
            <person name="Creczynski-Pasa T.B."/>
            <person name="Cunha-Junior N.C."/>
            <person name="Fagundes N."/>
            <person name="Falcao C.L."/>
            <person name="Fantinatti F."/>
            <person name="Farias I.P."/>
            <person name="Felipe M.S.S."/>
            <person name="Ferrari L.P."/>
            <person name="Ferro J.A."/>
            <person name="Ferro M.I.T."/>
            <person name="Franco G.R."/>
            <person name="Freitas N.S.A."/>
            <person name="Furlan L.R."/>
            <person name="Gazzinelli R.T."/>
            <person name="Gomes E.A."/>
            <person name="Goncalves P.R."/>
            <person name="Grangeiro T.B."/>
            <person name="Grattapaglia D."/>
            <person name="Grisard E.C."/>
            <person name="Hanna E.S."/>
            <person name="Jardim S.N."/>
            <person name="Laurino J."/>
            <person name="Leoi L.C.T."/>
            <person name="Lima L.F.A."/>
            <person name="Loureiro M.F."/>
            <person name="Lyra M.C.C.P."/>
            <person name="Madeira H.M.F."/>
            <person name="Manfio G.P."/>
            <person name="Maranhao A.Q."/>
            <person name="Martins W.S."/>
            <person name="di Mauro S.M.Z."/>
            <person name="de Medeiros S.R.B."/>
            <person name="Meissner R.V."/>
            <person name="Moreira M.A.M."/>
            <person name="Nascimento F.F."/>
            <person name="Nicolas M.F."/>
            <person name="Oliveira J.G."/>
            <person name="Oliveira S.C."/>
            <person name="Paixao R.F.C."/>
            <person name="Parente J.A."/>
            <person name="Pedrosa F.O."/>
            <person name="Pena S.D.J."/>
            <person name="Pereira J.O."/>
            <person name="Pereira M."/>
            <person name="Pinto L.S.R.C."/>
            <person name="Pinto L.S."/>
            <person name="Porto J.I.R."/>
            <person name="Potrich D.P."/>
            <person name="Ramalho-Neto C.E."/>
            <person name="Reis A.M.M."/>
            <person name="Rigo L.U."/>
            <person name="Rondinelli E."/>
            <person name="Santos E.B.P."/>
            <person name="Santos F.R."/>
            <person name="Schneider M.P.C."/>
            <person name="Seuanez H.N."/>
            <person name="Silva A.M.R."/>
            <person name="da Silva A.L.C."/>
            <person name="Silva D.W."/>
            <person name="Silva R."/>
            <person name="Simoes I.C."/>
            <person name="Simon D."/>
            <person name="Soares C.M.A."/>
            <person name="Soares R.B.A."/>
            <person name="Souza E.M."/>
            <person name="Souza K.R.L."/>
            <person name="Souza R.C."/>
            <person name="Steffens M.B.R."/>
            <person name="Steindel M."/>
            <person name="Teixeira S.R."/>
            <person name="Urmenyi T."/>
            <person name="Vettore A."/>
            <person name="Wassem R."/>
            <person name="Zaha A."/>
            <person name="Simpson A.J.G."/>
        </authorList>
    </citation>
    <scope>NUCLEOTIDE SEQUENCE [LARGE SCALE GENOMIC DNA]</scope>
    <source>
        <strain>ATCC 12472 / DSM 30191 / JCM 1249 / CCUG 213 / NBRC 12614 / NCIMB 9131 / NCTC 9757 / MK</strain>
    </source>
</reference>
<reference key="2">
    <citation type="submission" date="2011-07" db="PDB data bank">
        <title>X-ray crystal structure of protein CV0518 from Chromobacterium violaceum.</title>
        <authorList>
            <consortium name="Northeast structural genomics consortium (NESG)"/>
        </authorList>
    </citation>
    <scope>X-RAY CRYSTALLOGRAPHY (3.0 ANGSTROMS)</scope>
</reference>
<protein>
    <recommendedName>
        <fullName evidence="1">Ribosomal silencing factor RsfS</fullName>
    </recommendedName>
</protein>
<keyword id="KW-0002">3D-structure</keyword>
<keyword id="KW-0963">Cytoplasm</keyword>
<keyword id="KW-1185">Reference proteome</keyword>
<keyword id="KW-0678">Repressor</keyword>
<keyword id="KW-0810">Translation regulation</keyword>
<sequence length="122" mass="13193">MEIQEISKLAIEALEDIKGKDIIELDTSKLTSLFQRMIVATGDSNRQVKALANSVQVKLKEAGVDIVGSEGHESGEWVLVDAGDVVVHVMLPAVRDYYDIEALWGGQKPSFAVGAAKPWSAV</sequence>
<accession>Q7P0P8</accession>
<proteinExistence type="evidence at protein level"/>
<feature type="chain" id="PRO_0000419624" description="Ribosomal silencing factor RsfS">
    <location>
        <begin position="1"/>
        <end position="122"/>
    </location>
</feature>
<feature type="helix" evidence="2">
    <location>
        <begin position="3"/>
        <end position="16"/>
    </location>
</feature>
<feature type="strand" evidence="2">
    <location>
        <begin position="20"/>
        <end position="26"/>
    </location>
</feature>
<feature type="helix" evidence="2">
    <location>
        <begin position="27"/>
        <end position="29"/>
    </location>
</feature>
<feature type="strand" evidence="2">
    <location>
        <begin position="35"/>
        <end position="41"/>
    </location>
</feature>
<feature type="helix" evidence="2">
    <location>
        <begin position="45"/>
        <end position="61"/>
    </location>
</feature>
<feature type="turn" evidence="2">
    <location>
        <begin position="72"/>
        <end position="74"/>
    </location>
</feature>
<feature type="strand" evidence="2">
    <location>
        <begin position="75"/>
        <end position="82"/>
    </location>
</feature>
<feature type="strand" evidence="2">
    <location>
        <begin position="85"/>
        <end position="90"/>
    </location>
</feature>
<feature type="helix" evidence="2">
    <location>
        <begin position="92"/>
        <end position="98"/>
    </location>
</feature>
<feature type="helix" evidence="2">
    <location>
        <begin position="100"/>
        <end position="103"/>
    </location>
</feature>
<comment type="function">
    <text evidence="1">Functions as a ribosomal silencing factor. Interacts with ribosomal protein uL14 (rplN), blocking formation of intersubunit bridge B8. Prevents association of the 30S and 50S ribosomal subunits and the formation of functional ribosomes, thus repressing translation.</text>
</comment>
<comment type="subunit">
    <text evidence="1">Interacts with ribosomal protein uL14 (rplN).</text>
</comment>
<comment type="subcellular location">
    <subcellularLocation>
        <location evidence="1">Cytoplasm</location>
    </subcellularLocation>
</comment>
<comment type="similarity">
    <text evidence="1">Belongs to the Iojap/RsfS family.</text>
</comment>
<organism>
    <name type="scientific">Chromobacterium violaceum (strain ATCC 12472 / DSM 30191 / JCM 1249 / CCUG 213 / NBRC 12614 / NCIMB 9131 / NCTC 9757 / MK)</name>
    <dbReference type="NCBI Taxonomy" id="243365"/>
    <lineage>
        <taxon>Bacteria</taxon>
        <taxon>Pseudomonadati</taxon>
        <taxon>Pseudomonadota</taxon>
        <taxon>Betaproteobacteria</taxon>
        <taxon>Neisseriales</taxon>
        <taxon>Chromobacteriaceae</taxon>
        <taxon>Chromobacterium</taxon>
    </lineage>
</organism>